<protein>
    <recommendedName>
        <fullName evidence="1">Dihydroxy-acid dehydratase</fullName>
        <shortName evidence="1">DAD</shortName>
        <ecNumber evidence="1">4.2.1.9</ecNumber>
    </recommendedName>
</protein>
<comment type="function">
    <text evidence="1">Functions in the biosynthesis of branched-chain amino acids. Catalyzes the dehydration of (2R,3R)-2,3-dihydroxy-3-methylpentanoate (2,3-dihydroxy-3-methylvalerate) into 2-oxo-3-methylpentanoate (2-oxo-3-methylvalerate) and of (2R)-2,3-dihydroxy-3-methylbutanoate (2,3-dihydroxyisovalerate) into 2-oxo-3-methylbutanoate (2-oxoisovalerate), the penultimate precursor to L-isoleucine and L-valine, respectively.</text>
</comment>
<comment type="catalytic activity">
    <reaction evidence="1">
        <text>(2R)-2,3-dihydroxy-3-methylbutanoate = 3-methyl-2-oxobutanoate + H2O</text>
        <dbReference type="Rhea" id="RHEA:24809"/>
        <dbReference type="ChEBI" id="CHEBI:11851"/>
        <dbReference type="ChEBI" id="CHEBI:15377"/>
        <dbReference type="ChEBI" id="CHEBI:49072"/>
        <dbReference type="EC" id="4.2.1.9"/>
    </reaction>
    <physiologicalReaction direction="left-to-right" evidence="1">
        <dbReference type="Rhea" id="RHEA:24810"/>
    </physiologicalReaction>
</comment>
<comment type="catalytic activity">
    <reaction evidence="1">
        <text>(2R,3R)-2,3-dihydroxy-3-methylpentanoate = (S)-3-methyl-2-oxopentanoate + H2O</text>
        <dbReference type="Rhea" id="RHEA:27694"/>
        <dbReference type="ChEBI" id="CHEBI:15377"/>
        <dbReference type="ChEBI" id="CHEBI:35146"/>
        <dbReference type="ChEBI" id="CHEBI:49258"/>
        <dbReference type="EC" id="4.2.1.9"/>
    </reaction>
    <physiologicalReaction direction="left-to-right" evidence="1">
        <dbReference type="Rhea" id="RHEA:27695"/>
    </physiologicalReaction>
</comment>
<comment type="cofactor">
    <cofactor evidence="1">
        <name>[2Fe-2S] cluster</name>
        <dbReference type="ChEBI" id="CHEBI:190135"/>
    </cofactor>
    <text evidence="1">Binds 1 [2Fe-2S] cluster per subunit. This cluster acts as a Lewis acid cofactor.</text>
</comment>
<comment type="cofactor">
    <cofactor evidence="1">
        <name>Mg(2+)</name>
        <dbReference type="ChEBI" id="CHEBI:18420"/>
    </cofactor>
</comment>
<comment type="pathway">
    <text evidence="1">Amino-acid biosynthesis; L-isoleucine biosynthesis; L-isoleucine from 2-oxobutanoate: step 3/4.</text>
</comment>
<comment type="pathway">
    <text evidence="1">Amino-acid biosynthesis; L-valine biosynthesis; L-valine from pyruvate: step 3/4.</text>
</comment>
<comment type="subunit">
    <text evidence="1">Homodimer.</text>
</comment>
<comment type="similarity">
    <text evidence="1">Belongs to the IlvD/Edd family.</text>
</comment>
<proteinExistence type="inferred from homology"/>
<accession>Q2IH17</accession>
<reference key="1">
    <citation type="submission" date="2006-01" db="EMBL/GenBank/DDBJ databases">
        <title>Complete sequence of Anaeromyxobacter dehalogenans 2CP-C.</title>
        <authorList>
            <person name="Copeland A."/>
            <person name="Lucas S."/>
            <person name="Lapidus A."/>
            <person name="Barry K."/>
            <person name="Detter J.C."/>
            <person name="Glavina T."/>
            <person name="Hammon N."/>
            <person name="Israni S."/>
            <person name="Pitluck S."/>
            <person name="Brettin T."/>
            <person name="Bruce D."/>
            <person name="Han C."/>
            <person name="Tapia R."/>
            <person name="Gilna P."/>
            <person name="Kiss H."/>
            <person name="Schmutz J."/>
            <person name="Larimer F."/>
            <person name="Land M."/>
            <person name="Kyrpides N."/>
            <person name="Anderson I."/>
            <person name="Sanford R.A."/>
            <person name="Ritalahti K.M."/>
            <person name="Thomas H.S."/>
            <person name="Kirby J.R."/>
            <person name="Zhulin I.B."/>
            <person name="Loeffler F.E."/>
            <person name="Richardson P."/>
        </authorList>
    </citation>
    <scope>NUCLEOTIDE SEQUENCE [LARGE SCALE GENOMIC DNA]</scope>
    <source>
        <strain>2CP-C</strain>
    </source>
</reference>
<sequence>MRSDRIKKGFERAPHRSLLRATGLNDGDFEKPFIGIANSHIDIIPGHYYLQEYGRIAKDEIRKAGGVPFEFNTIGVDDGIAMGHEGMRYSLPSRELIADSIETVMNAHQLDALVCIPNCDKIVPGMLMGALRVNVPTVFVSGGPMKAGHLHDGTPIDLNTAFEAVGKRAQGQITDAELYEIECQACPSGGSCSGMFTANSMNVLCEAMGVALPGNGTVLALTPEREALVRRAARRAVEIAADERFRLRNLVNRDAIHNAMVVDMAMGGSSNTVLHMLAISREAGAPLSLRDIEEIAGKVSHIAKIAPSLATVHMEDIHRAGGVPAVLREAARRGGIVREDALTVTGETVGERIRGARTADPELIRPLENAYSPVGGLAVLFGNLAAEGAVVKTAGIQPSMRTFTGEAICFDSQDEAIAGIMGGKVKPGHFVVIRYEGPKGGPGMQEMLSPTSLIMGMGLGESVALVTDGRFSGATRGACVGHVSPEAAEGGVIGLVQDGDRITIDVAARALTVDVSDAELARRREGFRPKRRDPGSSWLRRYAHLVTNAANGAVLRSTDL</sequence>
<feature type="chain" id="PRO_1000000954" description="Dihydroxy-acid dehydratase">
    <location>
        <begin position="1"/>
        <end position="560"/>
    </location>
</feature>
<feature type="active site" description="Proton acceptor" evidence="1">
    <location>
        <position position="472"/>
    </location>
</feature>
<feature type="binding site" evidence="1">
    <location>
        <position position="78"/>
    </location>
    <ligand>
        <name>Mg(2+)</name>
        <dbReference type="ChEBI" id="CHEBI:18420"/>
    </ligand>
</feature>
<feature type="binding site" evidence="1">
    <location>
        <position position="119"/>
    </location>
    <ligand>
        <name>[2Fe-2S] cluster</name>
        <dbReference type="ChEBI" id="CHEBI:190135"/>
    </ligand>
</feature>
<feature type="binding site" evidence="1">
    <location>
        <position position="120"/>
    </location>
    <ligand>
        <name>Mg(2+)</name>
        <dbReference type="ChEBI" id="CHEBI:18420"/>
    </ligand>
</feature>
<feature type="binding site" description="via carbamate group" evidence="1">
    <location>
        <position position="121"/>
    </location>
    <ligand>
        <name>Mg(2+)</name>
        <dbReference type="ChEBI" id="CHEBI:18420"/>
    </ligand>
</feature>
<feature type="binding site" evidence="1">
    <location>
        <position position="192"/>
    </location>
    <ligand>
        <name>[2Fe-2S] cluster</name>
        <dbReference type="ChEBI" id="CHEBI:190135"/>
    </ligand>
</feature>
<feature type="binding site" evidence="1">
    <location>
        <position position="446"/>
    </location>
    <ligand>
        <name>Mg(2+)</name>
        <dbReference type="ChEBI" id="CHEBI:18420"/>
    </ligand>
</feature>
<feature type="modified residue" description="N6-carboxylysine" evidence="1">
    <location>
        <position position="121"/>
    </location>
</feature>
<gene>
    <name evidence="1" type="primary">ilvD</name>
    <name type="ordered locus">Adeh_4111</name>
</gene>
<evidence type="ECO:0000255" key="1">
    <source>
        <dbReference type="HAMAP-Rule" id="MF_00012"/>
    </source>
</evidence>
<organism>
    <name type="scientific">Anaeromyxobacter dehalogenans (strain 2CP-C)</name>
    <dbReference type="NCBI Taxonomy" id="290397"/>
    <lineage>
        <taxon>Bacteria</taxon>
        <taxon>Pseudomonadati</taxon>
        <taxon>Myxococcota</taxon>
        <taxon>Myxococcia</taxon>
        <taxon>Myxococcales</taxon>
        <taxon>Cystobacterineae</taxon>
        <taxon>Anaeromyxobacteraceae</taxon>
        <taxon>Anaeromyxobacter</taxon>
    </lineage>
</organism>
<name>ILVD_ANADE</name>
<keyword id="KW-0001">2Fe-2S</keyword>
<keyword id="KW-0028">Amino-acid biosynthesis</keyword>
<keyword id="KW-0100">Branched-chain amino acid biosynthesis</keyword>
<keyword id="KW-0408">Iron</keyword>
<keyword id="KW-0411">Iron-sulfur</keyword>
<keyword id="KW-0456">Lyase</keyword>
<keyword id="KW-0460">Magnesium</keyword>
<keyword id="KW-0479">Metal-binding</keyword>
<keyword id="KW-1185">Reference proteome</keyword>
<dbReference type="EC" id="4.2.1.9" evidence="1"/>
<dbReference type="EMBL" id="CP000251">
    <property type="protein sequence ID" value="ABC83875.1"/>
    <property type="molecule type" value="Genomic_DNA"/>
</dbReference>
<dbReference type="RefSeq" id="WP_011423157.1">
    <property type="nucleotide sequence ID" value="NC_007760.1"/>
</dbReference>
<dbReference type="SMR" id="Q2IH17"/>
<dbReference type="STRING" id="290397.Adeh_4111"/>
<dbReference type="KEGG" id="ade:Adeh_4111"/>
<dbReference type="eggNOG" id="COG0129">
    <property type="taxonomic scope" value="Bacteria"/>
</dbReference>
<dbReference type="HOGENOM" id="CLU_014271_4_2_7"/>
<dbReference type="OrthoDB" id="9807077at2"/>
<dbReference type="UniPathway" id="UPA00047">
    <property type="reaction ID" value="UER00057"/>
</dbReference>
<dbReference type="UniPathway" id="UPA00049">
    <property type="reaction ID" value="UER00061"/>
</dbReference>
<dbReference type="Proteomes" id="UP000001935">
    <property type="component" value="Chromosome"/>
</dbReference>
<dbReference type="GO" id="GO:0005829">
    <property type="term" value="C:cytosol"/>
    <property type="evidence" value="ECO:0007669"/>
    <property type="project" value="TreeGrafter"/>
</dbReference>
<dbReference type="GO" id="GO:0051537">
    <property type="term" value="F:2 iron, 2 sulfur cluster binding"/>
    <property type="evidence" value="ECO:0007669"/>
    <property type="project" value="UniProtKB-UniRule"/>
</dbReference>
<dbReference type="GO" id="GO:0004160">
    <property type="term" value="F:dihydroxy-acid dehydratase activity"/>
    <property type="evidence" value="ECO:0007669"/>
    <property type="project" value="UniProtKB-UniRule"/>
</dbReference>
<dbReference type="GO" id="GO:0000287">
    <property type="term" value="F:magnesium ion binding"/>
    <property type="evidence" value="ECO:0007669"/>
    <property type="project" value="UniProtKB-UniRule"/>
</dbReference>
<dbReference type="GO" id="GO:0009097">
    <property type="term" value="P:isoleucine biosynthetic process"/>
    <property type="evidence" value="ECO:0007669"/>
    <property type="project" value="UniProtKB-UniRule"/>
</dbReference>
<dbReference type="GO" id="GO:0009099">
    <property type="term" value="P:L-valine biosynthetic process"/>
    <property type="evidence" value="ECO:0007669"/>
    <property type="project" value="UniProtKB-UniRule"/>
</dbReference>
<dbReference type="FunFam" id="3.50.30.80:FF:000001">
    <property type="entry name" value="Dihydroxy-acid dehydratase"/>
    <property type="match status" value="1"/>
</dbReference>
<dbReference type="Gene3D" id="3.50.30.80">
    <property type="entry name" value="IlvD/EDD C-terminal domain-like"/>
    <property type="match status" value="1"/>
</dbReference>
<dbReference type="HAMAP" id="MF_00012">
    <property type="entry name" value="IlvD"/>
    <property type="match status" value="1"/>
</dbReference>
<dbReference type="InterPro" id="IPR042096">
    <property type="entry name" value="Dihydro-acid_dehy_C"/>
</dbReference>
<dbReference type="InterPro" id="IPR004404">
    <property type="entry name" value="DihydroxyA_deHydtase"/>
</dbReference>
<dbReference type="InterPro" id="IPR020558">
    <property type="entry name" value="DiOHA_6PGluconate_deHydtase_CS"/>
</dbReference>
<dbReference type="InterPro" id="IPR056740">
    <property type="entry name" value="ILV_EDD_C"/>
</dbReference>
<dbReference type="InterPro" id="IPR000581">
    <property type="entry name" value="ILV_EDD_N"/>
</dbReference>
<dbReference type="InterPro" id="IPR037237">
    <property type="entry name" value="IlvD/EDD_N"/>
</dbReference>
<dbReference type="NCBIfam" id="TIGR00110">
    <property type="entry name" value="ilvD"/>
    <property type="match status" value="1"/>
</dbReference>
<dbReference type="NCBIfam" id="NF002068">
    <property type="entry name" value="PRK00911.1"/>
    <property type="match status" value="1"/>
</dbReference>
<dbReference type="PANTHER" id="PTHR43661">
    <property type="entry name" value="D-XYLONATE DEHYDRATASE"/>
    <property type="match status" value="1"/>
</dbReference>
<dbReference type="PANTHER" id="PTHR43661:SF3">
    <property type="entry name" value="D-XYLONATE DEHYDRATASE YAGF-RELATED"/>
    <property type="match status" value="1"/>
</dbReference>
<dbReference type="Pfam" id="PF24877">
    <property type="entry name" value="ILV_EDD_C"/>
    <property type="match status" value="1"/>
</dbReference>
<dbReference type="Pfam" id="PF00920">
    <property type="entry name" value="ILVD_EDD_N"/>
    <property type="match status" value="1"/>
</dbReference>
<dbReference type="SUPFAM" id="SSF143975">
    <property type="entry name" value="IlvD/EDD N-terminal domain-like"/>
    <property type="match status" value="1"/>
</dbReference>
<dbReference type="SUPFAM" id="SSF52016">
    <property type="entry name" value="LeuD/IlvD-like"/>
    <property type="match status" value="1"/>
</dbReference>
<dbReference type="PROSITE" id="PS00886">
    <property type="entry name" value="ILVD_EDD_1"/>
    <property type="match status" value="1"/>
</dbReference>
<dbReference type="PROSITE" id="PS00887">
    <property type="entry name" value="ILVD_EDD_2"/>
    <property type="match status" value="1"/>
</dbReference>